<keyword id="KW-0028">Amino-acid biosynthesis</keyword>
<keyword id="KW-0963">Cytoplasm</keyword>
<keyword id="KW-0368">Histidine biosynthesis</keyword>
<keyword id="KW-0456">Lyase</keyword>
<keyword id="KW-1185">Reference proteome</keyword>
<comment type="function">
    <text evidence="1">IGPS catalyzes the conversion of PRFAR and glutamine to IGP, AICAR and glutamate. The HisF subunit catalyzes the cyclization activity that produces IGP and AICAR from PRFAR using the ammonia provided by the HisH subunit.</text>
</comment>
<comment type="catalytic activity">
    <reaction evidence="1">
        <text>5-[(5-phospho-1-deoxy-D-ribulos-1-ylimino)methylamino]-1-(5-phospho-beta-D-ribosyl)imidazole-4-carboxamide + L-glutamine = D-erythro-1-(imidazol-4-yl)glycerol 3-phosphate + 5-amino-1-(5-phospho-beta-D-ribosyl)imidazole-4-carboxamide + L-glutamate + H(+)</text>
        <dbReference type="Rhea" id="RHEA:24793"/>
        <dbReference type="ChEBI" id="CHEBI:15378"/>
        <dbReference type="ChEBI" id="CHEBI:29985"/>
        <dbReference type="ChEBI" id="CHEBI:58278"/>
        <dbReference type="ChEBI" id="CHEBI:58359"/>
        <dbReference type="ChEBI" id="CHEBI:58475"/>
        <dbReference type="ChEBI" id="CHEBI:58525"/>
        <dbReference type="EC" id="4.3.2.10"/>
    </reaction>
</comment>
<comment type="pathway">
    <text evidence="1">Amino-acid biosynthesis; L-histidine biosynthesis; L-histidine from 5-phospho-alpha-D-ribose 1-diphosphate: step 5/9.</text>
</comment>
<comment type="subunit">
    <text evidence="1">Heterodimer of HisH and HisF.</text>
</comment>
<comment type="subcellular location">
    <subcellularLocation>
        <location evidence="1">Cytoplasm</location>
    </subcellularLocation>
</comment>
<comment type="similarity">
    <text evidence="1">Belongs to the HisA/HisF family.</text>
</comment>
<proteinExistence type="inferred from homology"/>
<reference key="1">
    <citation type="journal article" date="2010" name="J. Bacteriol.">
        <title>Genome sequence of the Fleming strain of Micrococcus luteus, a simple free-living actinobacterium.</title>
        <authorList>
            <person name="Young M."/>
            <person name="Artsatbanov V."/>
            <person name="Beller H.R."/>
            <person name="Chandra G."/>
            <person name="Chater K.F."/>
            <person name="Dover L.G."/>
            <person name="Goh E.B."/>
            <person name="Kahan T."/>
            <person name="Kaprelyants A.S."/>
            <person name="Kyrpides N."/>
            <person name="Lapidus A."/>
            <person name="Lowry S.R."/>
            <person name="Lykidis A."/>
            <person name="Mahillon J."/>
            <person name="Markowitz V."/>
            <person name="Mavromatis K."/>
            <person name="Mukamolova G.V."/>
            <person name="Oren A."/>
            <person name="Rokem J.S."/>
            <person name="Smith M.C."/>
            <person name="Young D.I."/>
            <person name="Greenblatt C.L."/>
        </authorList>
    </citation>
    <scope>NUCLEOTIDE SEQUENCE [LARGE SCALE GENOMIC DNA]</scope>
    <source>
        <strain>ATCC 4698 / DSM 20030 / JCM 1464 / CCM 169 / CCUG 5858 / IAM 1056 / NBRC 3333 / NCIMB 9278 / NCTC 2665 / VKM Ac-2230</strain>
    </source>
</reference>
<dbReference type="EC" id="4.3.2.10" evidence="1"/>
<dbReference type="EMBL" id="CP001628">
    <property type="protein sequence ID" value="ACS30598.1"/>
    <property type="molecule type" value="Genomic_DNA"/>
</dbReference>
<dbReference type="RefSeq" id="WP_010078765.1">
    <property type="nucleotide sequence ID" value="NC_012803.1"/>
</dbReference>
<dbReference type="SMR" id="C5CBK1"/>
<dbReference type="STRING" id="465515.Mlut_10910"/>
<dbReference type="EnsemblBacteria" id="ACS30598">
    <property type="protein sequence ID" value="ACS30598"/>
    <property type="gene ID" value="Mlut_10910"/>
</dbReference>
<dbReference type="GeneID" id="93345248"/>
<dbReference type="KEGG" id="mlu:Mlut_10910"/>
<dbReference type="PATRIC" id="fig|465515.4.peg.1034"/>
<dbReference type="eggNOG" id="COG0107">
    <property type="taxonomic scope" value="Bacteria"/>
</dbReference>
<dbReference type="HOGENOM" id="CLU_048577_4_0_11"/>
<dbReference type="UniPathway" id="UPA00031">
    <property type="reaction ID" value="UER00010"/>
</dbReference>
<dbReference type="Proteomes" id="UP000000738">
    <property type="component" value="Chromosome"/>
</dbReference>
<dbReference type="GO" id="GO:0005737">
    <property type="term" value="C:cytoplasm"/>
    <property type="evidence" value="ECO:0007669"/>
    <property type="project" value="UniProtKB-SubCell"/>
</dbReference>
<dbReference type="GO" id="GO:0000107">
    <property type="term" value="F:imidazoleglycerol-phosphate synthase activity"/>
    <property type="evidence" value="ECO:0007669"/>
    <property type="project" value="UniProtKB-UniRule"/>
</dbReference>
<dbReference type="GO" id="GO:0016829">
    <property type="term" value="F:lyase activity"/>
    <property type="evidence" value="ECO:0007669"/>
    <property type="project" value="UniProtKB-KW"/>
</dbReference>
<dbReference type="GO" id="GO:0000105">
    <property type="term" value="P:L-histidine biosynthetic process"/>
    <property type="evidence" value="ECO:0007669"/>
    <property type="project" value="UniProtKB-UniRule"/>
</dbReference>
<dbReference type="CDD" id="cd04731">
    <property type="entry name" value="HisF"/>
    <property type="match status" value="1"/>
</dbReference>
<dbReference type="FunFam" id="3.20.20.70:FF:000006">
    <property type="entry name" value="Imidazole glycerol phosphate synthase subunit HisF"/>
    <property type="match status" value="1"/>
</dbReference>
<dbReference type="Gene3D" id="3.20.20.70">
    <property type="entry name" value="Aldolase class I"/>
    <property type="match status" value="1"/>
</dbReference>
<dbReference type="HAMAP" id="MF_01013">
    <property type="entry name" value="HisF"/>
    <property type="match status" value="1"/>
</dbReference>
<dbReference type="InterPro" id="IPR013785">
    <property type="entry name" value="Aldolase_TIM"/>
</dbReference>
<dbReference type="InterPro" id="IPR006062">
    <property type="entry name" value="His_biosynth"/>
</dbReference>
<dbReference type="InterPro" id="IPR004651">
    <property type="entry name" value="HisF"/>
</dbReference>
<dbReference type="InterPro" id="IPR050064">
    <property type="entry name" value="IGPS_HisA/HisF"/>
</dbReference>
<dbReference type="InterPro" id="IPR011060">
    <property type="entry name" value="RibuloseP-bd_barrel"/>
</dbReference>
<dbReference type="NCBIfam" id="TIGR00735">
    <property type="entry name" value="hisF"/>
    <property type="match status" value="1"/>
</dbReference>
<dbReference type="PANTHER" id="PTHR21235:SF2">
    <property type="entry name" value="IMIDAZOLE GLYCEROL PHOSPHATE SYNTHASE HISHF"/>
    <property type="match status" value="1"/>
</dbReference>
<dbReference type="PANTHER" id="PTHR21235">
    <property type="entry name" value="IMIDAZOLE GLYCEROL PHOSPHATE SYNTHASE SUBUNIT HISF/H IGP SYNTHASE SUBUNIT HISF/H"/>
    <property type="match status" value="1"/>
</dbReference>
<dbReference type="Pfam" id="PF00977">
    <property type="entry name" value="His_biosynth"/>
    <property type="match status" value="1"/>
</dbReference>
<dbReference type="SUPFAM" id="SSF51366">
    <property type="entry name" value="Ribulose-phoshate binding barrel"/>
    <property type="match status" value="1"/>
</dbReference>
<name>HIS6_MICLC</name>
<accession>C5CBK1</accession>
<protein>
    <recommendedName>
        <fullName evidence="1">Imidazole glycerol phosphate synthase subunit HisF</fullName>
        <ecNumber evidence="1">4.3.2.10</ecNumber>
    </recommendedName>
    <alternativeName>
        <fullName evidence="1">IGP synthase cyclase subunit</fullName>
    </alternativeName>
    <alternativeName>
        <fullName evidence="1">IGP synthase subunit HisF</fullName>
    </alternativeName>
    <alternativeName>
        <fullName evidence="1">ImGP synthase subunit HisF</fullName>
        <shortName evidence="1">IGPS subunit HisF</shortName>
    </alternativeName>
</protein>
<gene>
    <name evidence="1" type="primary">hisF</name>
    <name type="ordered locus">Mlut_10910</name>
</gene>
<sequence length="256" mass="27214">MSLAVRVIPCLDVDAGRVVKGVNFENLRDAGDPVELARRYNAAGADEITFLDVTASTSDRATTYDVVTRTAEEVFIPLTVGGGVRTVEDVDRLLRTGADKVSVNTAAVARPELITEITRRFGSQVLVLSLDARRTEDPGCASGYEVTTHGGRRGTGIDAVAWCREASERGVGEILLNSIDADGTREGFDLEMIRDVRAVTRVPLIASGGAGEPEHFPPAVAAGADAVLAASLFHFGPDDMLARVKDALRQAGHTVR</sequence>
<organism>
    <name type="scientific">Micrococcus luteus (strain ATCC 4698 / DSM 20030 / JCM 1464 / CCM 169 / CCUG 5858 / IAM 1056 / NBRC 3333 / NCIMB 9278 / NCTC 2665 / VKM Ac-2230)</name>
    <name type="common">Micrococcus lysodeikticus</name>
    <dbReference type="NCBI Taxonomy" id="465515"/>
    <lineage>
        <taxon>Bacteria</taxon>
        <taxon>Bacillati</taxon>
        <taxon>Actinomycetota</taxon>
        <taxon>Actinomycetes</taxon>
        <taxon>Micrococcales</taxon>
        <taxon>Micrococcaceae</taxon>
        <taxon>Micrococcus</taxon>
    </lineage>
</organism>
<evidence type="ECO:0000255" key="1">
    <source>
        <dbReference type="HAMAP-Rule" id="MF_01013"/>
    </source>
</evidence>
<feature type="chain" id="PRO_1000213214" description="Imidazole glycerol phosphate synthase subunit HisF">
    <location>
        <begin position="1"/>
        <end position="256"/>
    </location>
</feature>
<feature type="active site" evidence="1">
    <location>
        <position position="12"/>
    </location>
</feature>
<feature type="active site" evidence="1">
    <location>
        <position position="131"/>
    </location>
</feature>